<geneLocation type="chloroplast"/>
<comment type="function">
    <text evidence="1">One of the essential components for the initiation of protein synthesis. Stabilizes the binding of IF-2 and IF-3 on the 30S subunit to which N-formylmethionyl-tRNA(fMet) subsequently binds. Helps modulate mRNA selection, yielding the 30S pre-initiation complex (PIC). Upon addition of the 50S ribosomal subunit IF-1, IF-2 and IF-3 are released leaving the mature 70S translation initiation complex.</text>
</comment>
<comment type="subunit">
    <text evidence="1">Component of the 30S ribosomal translation pre-initiation complex which assembles on the 30S ribosome in the order IF-2 and IF-3, IF-1 and N-formylmethionyl-tRNA(fMet); mRNA recruitment can occur at any time during PIC assembly.</text>
</comment>
<comment type="subcellular location">
    <subcellularLocation>
        <location evidence="1">Plastid</location>
        <location evidence="1">Chloroplast</location>
    </subcellularLocation>
</comment>
<comment type="similarity">
    <text evidence="1">Belongs to the IF-1 family.</text>
</comment>
<protein>
    <recommendedName>
        <fullName evidence="1">Translation initiation factor IF-1, chloroplastic</fullName>
    </recommendedName>
</protein>
<evidence type="ECO:0000255" key="1">
    <source>
        <dbReference type="HAMAP-Rule" id="MF_00075"/>
    </source>
</evidence>
<sequence>MKEQKWIHEGLITESLPNGMFRVRLDNEDLILGYVSGKIRRSFIRILPGDRVKIEVSRYDSTRGRIIYRLRNKDSKD</sequence>
<gene>
    <name evidence="1" type="primary">infA</name>
</gene>
<accession>Q7ICQ5</accession>
<proteinExistence type="inferred from homology"/>
<keyword id="KW-0150">Chloroplast</keyword>
<keyword id="KW-0396">Initiation factor</keyword>
<keyword id="KW-0934">Plastid</keyword>
<keyword id="KW-0648">Protein biosynthesis</keyword>
<keyword id="KW-0694">RNA-binding</keyword>
<keyword id="KW-0699">rRNA-binding</keyword>
<reference key="1">
    <citation type="journal article" date="2001" name="Plant Cell">
        <title>Many parallel losses of infA from chloroplast DNA during angiosperm evolution with multiple independent transfers to the nucleus.</title>
        <authorList>
            <person name="Millen R.S."/>
            <person name="Olmstead R.G."/>
            <person name="Adams K.L."/>
            <person name="Palmer J.D."/>
            <person name="Lao N.T."/>
            <person name="Heggie L."/>
            <person name="Kavanagh T.A."/>
            <person name="Hibberd J.M."/>
            <person name="Gray J.C."/>
            <person name="Morden C.W."/>
            <person name="Calie P.J."/>
            <person name="Jermiin L.S."/>
            <person name="Wolfe K.H."/>
        </authorList>
    </citation>
    <scope>NUCLEOTIDE SEQUENCE [GENOMIC DNA]</scope>
</reference>
<name>IF1C_FOUSP</name>
<organism>
    <name type="scientific">Fouquieria splendens</name>
    <name type="common">Ocotillo</name>
    <dbReference type="NCBI Taxonomy" id="13533"/>
    <lineage>
        <taxon>Eukaryota</taxon>
        <taxon>Viridiplantae</taxon>
        <taxon>Streptophyta</taxon>
        <taxon>Embryophyta</taxon>
        <taxon>Tracheophyta</taxon>
        <taxon>Spermatophyta</taxon>
        <taxon>Magnoliopsida</taxon>
        <taxon>eudicotyledons</taxon>
        <taxon>Gunneridae</taxon>
        <taxon>Pentapetalae</taxon>
        <taxon>asterids</taxon>
        <taxon>Ericales</taxon>
        <taxon>Fouquieriaceae</taxon>
        <taxon>Fouquieria</taxon>
    </lineage>
</organism>
<dbReference type="EMBL" id="AF347634">
    <property type="protein sequence ID" value="AAK38858.1"/>
    <property type="molecule type" value="Genomic_DNA"/>
</dbReference>
<dbReference type="SMR" id="Q7ICQ5"/>
<dbReference type="GO" id="GO:0009507">
    <property type="term" value="C:chloroplast"/>
    <property type="evidence" value="ECO:0007669"/>
    <property type="project" value="UniProtKB-SubCell"/>
</dbReference>
<dbReference type="GO" id="GO:0005829">
    <property type="term" value="C:cytosol"/>
    <property type="evidence" value="ECO:0007669"/>
    <property type="project" value="TreeGrafter"/>
</dbReference>
<dbReference type="GO" id="GO:0043022">
    <property type="term" value="F:ribosome binding"/>
    <property type="evidence" value="ECO:0007669"/>
    <property type="project" value="UniProtKB-UniRule"/>
</dbReference>
<dbReference type="GO" id="GO:0019843">
    <property type="term" value="F:rRNA binding"/>
    <property type="evidence" value="ECO:0007669"/>
    <property type="project" value="UniProtKB-UniRule"/>
</dbReference>
<dbReference type="GO" id="GO:0003743">
    <property type="term" value="F:translation initiation factor activity"/>
    <property type="evidence" value="ECO:0007669"/>
    <property type="project" value="UniProtKB-UniRule"/>
</dbReference>
<dbReference type="CDD" id="cd04451">
    <property type="entry name" value="S1_IF1"/>
    <property type="match status" value="1"/>
</dbReference>
<dbReference type="FunFam" id="2.40.50.140:FF:000019">
    <property type="entry name" value="Translation initiation factor IF-1, chloroplastic"/>
    <property type="match status" value="1"/>
</dbReference>
<dbReference type="Gene3D" id="2.40.50.140">
    <property type="entry name" value="Nucleic acid-binding proteins"/>
    <property type="match status" value="1"/>
</dbReference>
<dbReference type="HAMAP" id="MF_00075">
    <property type="entry name" value="IF_1"/>
    <property type="match status" value="1"/>
</dbReference>
<dbReference type="InterPro" id="IPR012340">
    <property type="entry name" value="NA-bd_OB-fold"/>
</dbReference>
<dbReference type="InterPro" id="IPR006196">
    <property type="entry name" value="RNA-binding_domain_S1_IF1"/>
</dbReference>
<dbReference type="InterPro" id="IPR003029">
    <property type="entry name" value="S1_domain"/>
</dbReference>
<dbReference type="InterPro" id="IPR004368">
    <property type="entry name" value="TIF_IF1"/>
</dbReference>
<dbReference type="NCBIfam" id="TIGR00008">
    <property type="entry name" value="infA"/>
    <property type="match status" value="1"/>
</dbReference>
<dbReference type="PANTHER" id="PTHR33370">
    <property type="entry name" value="TRANSLATION INITIATION FACTOR IF-1, CHLOROPLASTIC"/>
    <property type="match status" value="1"/>
</dbReference>
<dbReference type="PANTHER" id="PTHR33370:SF1">
    <property type="entry name" value="TRANSLATION INITIATION FACTOR IF-1, CHLOROPLASTIC"/>
    <property type="match status" value="1"/>
</dbReference>
<dbReference type="Pfam" id="PF01176">
    <property type="entry name" value="eIF-1a"/>
    <property type="match status" value="1"/>
</dbReference>
<dbReference type="SMART" id="SM00316">
    <property type="entry name" value="S1"/>
    <property type="match status" value="1"/>
</dbReference>
<dbReference type="SUPFAM" id="SSF50249">
    <property type="entry name" value="Nucleic acid-binding proteins"/>
    <property type="match status" value="1"/>
</dbReference>
<dbReference type="PROSITE" id="PS50832">
    <property type="entry name" value="S1_IF1_TYPE"/>
    <property type="match status" value="1"/>
</dbReference>
<feature type="chain" id="PRO_0000095929" description="Translation initiation factor IF-1, chloroplastic">
    <location>
        <begin position="1"/>
        <end position="77"/>
    </location>
</feature>
<feature type="domain" description="S1-like" evidence="1">
    <location>
        <begin position="1"/>
        <end position="71"/>
    </location>
</feature>